<dbReference type="EMBL" id="L37426">
    <property type="protein sequence ID" value="AAC41479.1"/>
    <property type="molecule type" value="Genomic_DNA"/>
</dbReference>
<dbReference type="EMBL" id="CP000284">
    <property type="protein sequence ID" value="ABE48826.1"/>
    <property type="status" value="ALT_INIT"/>
    <property type="molecule type" value="Genomic_DNA"/>
</dbReference>
<dbReference type="RefSeq" id="WP_048811529.1">
    <property type="nucleotide sequence ID" value="NC_007947.1"/>
</dbReference>
<dbReference type="SMR" id="Q50400"/>
<dbReference type="STRING" id="265072.Mfla_0556"/>
<dbReference type="KEGG" id="mfa:Mfla_0556"/>
<dbReference type="eggNOG" id="COG3241">
    <property type="taxonomic scope" value="Bacteria"/>
</dbReference>
<dbReference type="HOGENOM" id="CLU_112845_1_0_4"/>
<dbReference type="OrthoDB" id="9814063at2"/>
<dbReference type="UniPathway" id="UPA00895"/>
<dbReference type="Proteomes" id="UP000002440">
    <property type="component" value="Chromosome"/>
</dbReference>
<dbReference type="GO" id="GO:0042597">
    <property type="term" value="C:periplasmic space"/>
    <property type="evidence" value="ECO:0007669"/>
    <property type="project" value="UniProtKB-SubCell"/>
</dbReference>
<dbReference type="GO" id="GO:0005507">
    <property type="term" value="F:copper ion binding"/>
    <property type="evidence" value="ECO:0007669"/>
    <property type="project" value="InterPro"/>
</dbReference>
<dbReference type="GO" id="GO:0009055">
    <property type="term" value="F:electron transfer activity"/>
    <property type="evidence" value="ECO:0007669"/>
    <property type="project" value="InterPro"/>
</dbReference>
<dbReference type="CDD" id="cd13922">
    <property type="entry name" value="Azurin"/>
    <property type="match status" value="1"/>
</dbReference>
<dbReference type="Gene3D" id="2.60.40.420">
    <property type="entry name" value="Cupredoxins - blue copper proteins"/>
    <property type="match status" value="1"/>
</dbReference>
<dbReference type="InterPro" id="IPR014068">
    <property type="entry name" value="Azurin"/>
</dbReference>
<dbReference type="InterPro" id="IPR000923">
    <property type="entry name" value="BlueCu_1"/>
</dbReference>
<dbReference type="InterPro" id="IPR050845">
    <property type="entry name" value="Cu-binding_ET"/>
</dbReference>
<dbReference type="InterPro" id="IPR008972">
    <property type="entry name" value="Cupredoxin"/>
</dbReference>
<dbReference type="NCBIfam" id="TIGR02695">
    <property type="entry name" value="azurin"/>
    <property type="match status" value="1"/>
</dbReference>
<dbReference type="PANTHER" id="PTHR38439">
    <property type="entry name" value="AURACYANIN-B"/>
    <property type="match status" value="1"/>
</dbReference>
<dbReference type="PANTHER" id="PTHR38439:SF2">
    <property type="entry name" value="OUTER MEMBRANE PROTEIN H.8"/>
    <property type="match status" value="1"/>
</dbReference>
<dbReference type="Pfam" id="PF00127">
    <property type="entry name" value="Copper-bind"/>
    <property type="match status" value="1"/>
</dbReference>
<dbReference type="SUPFAM" id="SSF49503">
    <property type="entry name" value="Cupredoxins"/>
    <property type="match status" value="1"/>
</dbReference>
<accession>Q50400</accession>
<accession>Q1H3W1</accession>
<gene>
    <name type="primary">azu</name>
    <name type="ordered locus">Mfla_0556</name>
</gene>
<keyword id="KW-0186">Copper</keyword>
<keyword id="KW-1015">Disulfide bond</keyword>
<keyword id="KW-0249">Electron transport</keyword>
<keyword id="KW-0479">Metal-binding</keyword>
<keyword id="KW-0574">Periplasm</keyword>
<keyword id="KW-1185">Reference proteome</keyword>
<keyword id="KW-0732">Signal</keyword>
<keyword id="KW-0813">Transport</keyword>
<proteinExistence type="inferred from homology"/>
<protein>
    <recommendedName>
        <fullName>Azurin</fullName>
    </recommendedName>
</protein>
<evidence type="ECO:0000250" key="1"/>
<evidence type="ECO:0000255" key="2"/>
<evidence type="ECO:0000305" key="3"/>
<feature type="signal peptide" evidence="2">
    <location>
        <begin position="1"/>
        <end position="18"/>
    </location>
</feature>
<feature type="chain" id="PRO_0000002862" description="Azurin">
    <location>
        <begin position="19"/>
        <end position="148"/>
    </location>
</feature>
<feature type="domain" description="Plastocyanin-like">
    <location>
        <begin position="19"/>
        <end position="148"/>
    </location>
</feature>
<feature type="binding site" evidence="1">
    <location>
        <position position="65"/>
    </location>
    <ligand>
        <name>Cu cation</name>
        <dbReference type="ChEBI" id="CHEBI:23378"/>
    </ligand>
</feature>
<feature type="binding site" evidence="1">
    <location>
        <position position="131"/>
    </location>
    <ligand>
        <name>Cu cation</name>
        <dbReference type="ChEBI" id="CHEBI:23378"/>
    </ligand>
</feature>
<feature type="binding site" evidence="1">
    <location>
        <position position="136"/>
    </location>
    <ligand>
        <name>Cu cation</name>
        <dbReference type="ChEBI" id="CHEBI:23378"/>
    </ligand>
</feature>
<feature type="binding site" evidence="1">
    <location>
        <position position="140"/>
    </location>
    <ligand>
        <name>Cu cation</name>
        <dbReference type="ChEBI" id="CHEBI:23378"/>
    </ligand>
</feature>
<feature type="disulfide bond" evidence="1">
    <location>
        <begin position="22"/>
        <end position="45"/>
    </location>
</feature>
<organism>
    <name type="scientific">Methylobacillus flagellatus (strain ATCC 51484 / DSM 6875 / VKM B-1610 / KT)</name>
    <dbReference type="NCBI Taxonomy" id="265072"/>
    <lineage>
        <taxon>Bacteria</taxon>
        <taxon>Pseudomonadati</taxon>
        <taxon>Pseudomonadota</taxon>
        <taxon>Betaproteobacteria</taxon>
        <taxon>Nitrosomonadales</taxon>
        <taxon>Methylophilaceae</taxon>
        <taxon>Methylobacillus</taxon>
    </lineage>
</organism>
<name>AZUR_METFK</name>
<comment type="function">
    <text>Probable electron acceptor for methylamine dehydrogenase.</text>
</comment>
<comment type="pathway">
    <text>One-carbon metabolism; methylamine degradation.</text>
</comment>
<comment type="subcellular location">
    <subcellularLocation>
        <location evidence="3">Periplasm</location>
    </subcellularLocation>
</comment>
<comment type="sequence caution" evidence="3">
    <conflict type="erroneous initiation">
        <sequence resource="EMBL-CDS" id="ABE48826"/>
    </conflict>
</comment>
<sequence length="148" mass="15875">MRNQLLFALAFIPTIAAAASNCEVNVSAGDSMAFNTRSIDIPKSCKEFTVNFAHTGTASKAGMGHNWVLARSADVNDLAKAGVEAGIDKNFIPPNDPRVLAYTPLVGGGEKTSVTFKPSILKDGESYSFYCSFAFHSFMMRGTVKLVD</sequence>
<reference key="1">
    <citation type="journal article" date="1995" name="J. Bacteriol.">
        <title>Cloning, sequencing, and mutation of a gene for azurin in Methylobacillus flagellatum KT.</title>
        <authorList>
            <person name="Gak E.R."/>
            <person name="Chistoserdov A.Y."/>
            <person name="Lidstrom M.E."/>
        </authorList>
    </citation>
    <scope>NUCLEOTIDE SEQUENCE [GENOMIC DNA]</scope>
</reference>
<reference key="2">
    <citation type="submission" date="2006-03" db="EMBL/GenBank/DDBJ databases">
        <title>Complete sequence of Methylobacillus flagellatus KT.</title>
        <authorList>
            <consortium name="US DOE Joint Genome Institute"/>
            <person name="Copeland A."/>
            <person name="Lucas S."/>
            <person name="Lapidus A."/>
            <person name="Barry K."/>
            <person name="Detter J.C."/>
            <person name="Glavina del Rio T."/>
            <person name="Hammon N."/>
            <person name="Israni S."/>
            <person name="Dalin E."/>
            <person name="Tice H."/>
            <person name="Pitluck S."/>
            <person name="Brettin T."/>
            <person name="Bruce D."/>
            <person name="Han C."/>
            <person name="Tapia R."/>
            <person name="Saunders E."/>
            <person name="Gilna P."/>
            <person name="Schmutz J."/>
            <person name="Larimer F."/>
            <person name="Land M."/>
            <person name="Kyrpides N."/>
            <person name="Anderson I."/>
            <person name="Richardson P."/>
        </authorList>
    </citation>
    <scope>NUCLEOTIDE SEQUENCE [LARGE SCALE GENOMIC DNA]</scope>
    <source>
        <strain>ATCC 51484 / DSM 6875 / VKM B-1610 / KT</strain>
    </source>
</reference>